<gene>
    <name type="primary">Ss18</name>
    <name type="synonym">Ssxt</name>
    <name type="synonym">Syt</name>
</gene>
<comment type="function">
    <text evidence="1">Appears to function synergistically with RBM14 as a transcriptional coactivator. Component of SWI/SNF chromatin remodeling subcomplex GBAF that carries out key enzymatic activities, changing chromatin structure by altering DNA-histone contacts within a nucleosome in an ATP-dependent manner.</text>
</comment>
<comment type="subunit">
    <text evidence="1 4">Interacts with MLLT10 (By similarity). Component of the multiprotein chromatin-remodeling complexes SWI/SNF: SWI/SNF-A (BAF), SWI/SNF-B (PBAF) and related complexes. The canonical complex contains a catalytic subunit (either SMARCA4/BRG1/BAF190A or SMARCA2/BRM/BAF190B) and at least SMARCE1, ACTL6A/BAF53, SMARCC1/BAF155, SMARCC2/BAF170, and SMARCB1/SNF5/BAF47. Other subunits specific to each of the complexes may also be present permitting several possible combinations developmentally and tissue specific. Component of the SWI/SNF (GBAF) subcomplex, which includes at least BICRA or BICRAL (mutually exclusive), BRD9, SS18, the core BAF subunits, SMARCA2/BRM, SMARCA4/BRG1/BAF190A, ACTL6A/BAF53, SMARCC1/BAF155, and SMARCD1/BAF60A (PubMed:29374058).</text>
</comment>
<comment type="subcellular location">
    <subcellularLocation>
        <location evidence="1">Nucleus</location>
    </subcellularLocation>
</comment>
<comment type="developmental stage">
    <text>Ubiquitously expressed in early embryogenesis (12.5 days). In later stages (14.5 days), the expression is restricted to cartilage forming cells, to specific neuronal cells and some epithelial derived tissues. In adults, SSXT is expressed in heart, kidney, testis and also in muscle, brain and liver. In mature testis, expression is specifically observed in primary spermatocytes.</text>
</comment>
<comment type="similarity">
    <text evidence="5">Belongs to the SS18 family.</text>
</comment>
<protein>
    <recommendedName>
        <fullName>Protein SSXT</fullName>
    </recommendedName>
    <alternativeName>
        <fullName>Protein SYT</fullName>
    </alternativeName>
    <alternativeName>
        <fullName>Synovial sarcoma-associated Ss18-alpha</fullName>
    </alternativeName>
</protein>
<accession>Q62280</accession>
<accession>Q3TM96</accession>
<feature type="initiator methionine" description="Removed" evidence="1">
    <location>
        <position position="1"/>
    </location>
</feature>
<feature type="chain" id="PRO_0000181824" description="Protein SSXT">
    <location>
        <begin position="2"/>
        <end position="418"/>
    </location>
</feature>
<feature type="repeat" description="1">
    <location>
        <begin position="344"/>
        <end position="356"/>
    </location>
</feature>
<feature type="repeat" description="2">
    <location>
        <begin position="357"/>
        <end position="369"/>
    </location>
</feature>
<feature type="region of interest" description="Disordered" evidence="3">
    <location>
        <begin position="77"/>
        <end position="120"/>
    </location>
</feature>
<feature type="region of interest" description="Disordered" evidence="3">
    <location>
        <begin position="193"/>
        <end position="418"/>
    </location>
</feature>
<feature type="region of interest" description="2 X 13 AA imperfect tandem repeats">
    <location>
        <begin position="344"/>
        <end position="369"/>
    </location>
</feature>
<feature type="short sequence motif" description="SH2-binding" evidence="2">
    <location>
        <begin position="50"/>
        <end position="53"/>
    </location>
</feature>
<feature type="short sequence motif" description="SH2-binding" evidence="2">
    <location>
        <begin position="374"/>
        <end position="377"/>
    </location>
</feature>
<feature type="short sequence motif" description="SH3-binding" evidence="2">
    <location>
        <begin position="392"/>
        <end position="401"/>
    </location>
</feature>
<feature type="short sequence motif" description="SH2-binding" evidence="2">
    <location>
        <begin position="413"/>
        <end position="416"/>
    </location>
</feature>
<feature type="compositionally biased region" description="Low complexity" evidence="3">
    <location>
        <begin position="193"/>
        <end position="211"/>
    </location>
</feature>
<feature type="compositionally biased region" description="Basic and acidic residues" evidence="3">
    <location>
        <begin position="309"/>
        <end position="318"/>
    </location>
</feature>
<feature type="compositionally biased region" description="Low complexity" evidence="3">
    <location>
        <begin position="328"/>
        <end position="337"/>
    </location>
</feature>
<feature type="compositionally biased region" description="Low complexity" evidence="3">
    <location>
        <begin position="345"/>
        <end position="367"/>
    </location>
</feature>
<feature type="compositionally biased region" description="Low complexity" evidence="3">
    <location>
        <begin position="376"/>
        <end position="393"/>
    </location>
</feature>
<feature type="compositionally biased region" description="Pro residues" evidence="3">
    <location>
        <begin position="394"/>
        <end position="403"/>
    </location>
</feature>
<feature type="compositionally biased region" description="Low complexity" evidence="3">
    <location>
        <begin position="404"/>
        <end position="418"/>
    </location>
</feature>
<feature type="modified residue" description="N-acetylserine" evidence="1">
    <location>
        <position position="2"/>
    </location>
</feature>
<feature type="sequence conflict" description="In Ref. 1; CAA63733 and 2; AAL17746." evidence="5" ref="1 2">
    <original>S</original>
    <variation>N</variation>
    <location>
        <position position="156"/>
    </location>
</feature>
<sequence length="418" mass="45864">MSVAFAAPRQRGKGEITPAAIQKMLDENNHLIQCIMDYQNKGKASECSQYQQILHTNLVYLATIADSNQNMQSLLPAPPTQTMPMGPGGMSQSGPPPPPRSHNMPSDGMVGGGPPAPHMQNQMNGQMPGPNHMPMQGPGPSQLSMTNSSMNMPSSSHGSMGGYNHSVPSSQSMPVQNQMTMSQGQPMGNYGPRPNMNMQPNQGPMMHQQPPSQQYNMPPGGAQHYQGQQAPMGLMGQVNQGSHMMGQRQMPPYRPPQQGPPQQYSGQEDYYGDQYSHGGQGPPEGMNQQYYPDGHNDYGYQQPSYPEQGYDRPYEDSSQHYYEGGNSQYGQQQDAYQGPPPQQGYPPQQQQYPGQQGYPGQQQSYGPSQGGPGPQYPNYPQGQGQQYGGYRPTQPGPPQPPQQRPYGYDQGQYGNYQQ</sequence>
<keyword id="KW-0007">Acetylation</keyword>
<keyword id="KW-0010">Activator</keyword>
<keyword id="KW-0539">Nucleus</keyword>
<keyword id="KW-1185">Reference proteome</keyword>
<keyword id="KW-0677">Repeat</keyword>
<keyword id="KW-0804">Transcription</keyword>
<keyword id="KW-0805">Transcription regulation</keyword>
<dbReference type="EMBL" id="X93357">
    <property type="protein sequence ID" value="CAA63733.1"/>
    <property type="molecule type" value="mRNA"/>
</dbReference>
<dbReference type="EMBL" id="AY055726">
    <property type="protein sequence ID" value="AAL17746.1"/>
    <property type="molecule type" value="Genomic_DNA"/>
</dbReference>
<dbReference type="EMBL" id="AK166053">
    <property type="protein sequence ID" value="BAE38546.1"/>
    <property type="molecule type" value="mRNA"/>
</dbReference>
<dbReference type="CCDS" id="CCDS29070.1"/>
<dbReference type="RefSeq" id="NP_033306.2">
    <property type="nucleotide sequence ID" value="NM_009280.2"/>
</dbReference>
<dbReference type="SMR" id="Q62280"/>
<dbReference type="BioGRID" id="234592">
    <property type="interactions" value="4"/>
</dbReference>
<dbReference type="ComplexPortal" id="CPX-4202">
    <property type="entry name" value="GBAF (SWI/SNF) ATP-dependent chromatin remodeling complex, ACTL6A-BICRA-SMARCA2 variant"/>
</dbReference>
<dbReference type="ComplexPortal" id="CPX-4204">
    <property type="entry name" value="GBAF (SWI/SNF) ATP-dependent chromatin remodeling complex, ACTL6A-BICRAL-SMARCA2 variant"/>
</dbReference>
<dbReference type="ComplexPortal" id="CPX-4221">
    <property type="entry name" value="GBAF (SWI/SNF) ATP-dependent chromatin remodeling complex, ACTL6A-BICRA-SMARCA4 variant"/>
</dbReference>
<dbReference type="ComplexPortal" id="CPX-4222">
    <property type="entry name" value="GBAF (SWI/SNF) ATP-dependent chromatin remodeling complex, ACTL6A-BICRAL-SMARCA4 variant"/>
</dbReference>
<dbReference type="ComplexPortal" id="CPX-4227">
    <property type="entry name" value="GBAF (SWI/SNF) ATP-dependent chromatin remodeling complex, ACTL6B-BICRA-SMARCA2 variant"/>
</dbReference>
<dbReference type="ComplexPortal" id="CPX-4228">
    <property type="entry name" value="GBAF (SWI/SNF) ATP-dependent chromatin remodeling complex, ACTL6B-BICRAL-SMARCA2 variant"/>
</dbReference>
<dbReference type="ComplexPortal" id="CPX-4229">
    <property type="entry name" value="GBAF (SWI/SNF) ATP-dependent chromatin remodeling complex, ACTL6B-BICRA-SMARCA4 variant"/>
</dbReference>
<dbReference type="ComplexPortal" id="CPX-4230">
    <property type="entry name" value="GBAF (SWI/SNF) ATP-dependent chromatin remodeling complex, ACTL6B-BICRAL-SMARCA4 variant"/>
</dbReference>
<dbReference type="DIP" id="DIP-60230N"/>
<dbReference type="FunCoup" id="Q62280">
    <property type="interactions" value="3030"/>
</dbReference>
<dbReference type="IntAct" id="Q62280">
    <property type="interactions" value="4"/>
</dbReference>
<dbReference type="MINT" id="Q62280"/>
<dbReference type="STRING" id="10090.ENSMUSP00000046320"/>
<dbReference type="iPTMnet" id="Q62280"/>
<dbReference type="PhosphoSitePlus" id="Q62280"/>
<dbReference type="PaxDb" id="10090-ENSMUSP00000046320"/>
<dbReference type="PeptideAtlas" id="Q62280"/>
<dbReference type="ProteomicsDB" id="257424"/>
<dbReference type="Pumba" id="Q62280"/>
<dbReference type="Antibodypedia" id="22102">
    <property type="antibodies" value="170 antibodies from 30 providers"/>
</dbReference>
<dbReference type="DNASU" id="268996"/>
<dbReference type="Ensembl" id="ENSMUST00000040924.9">
    <property type="protein sequence ID" value="ENSMUSP00000046320.8"/>
    <property type="gene ID" value="ENSMUSG00000037013.18"/>
</dbReference>
<dbReference type="GeneID" id="268996"/>
<dbReference type="KEGG" id="mmu:268996"/>
<dbReference type="UCSC" id="uc008ede.1">
    <property type="organism name" value="mouse"/>
</dbReference>
<dbReference type="AGR" id="MGI:107708"/>
<dbReference type="CTD" id="6760"/>
<dbReference type="MGI" id="MGI:107708">
    <property type="gene designation" value="Ss18"/>
</dbReference>
<dbReference type="VEuPathDB" id="HostDB:ENSMUSG00000037013"/>
<dbReference type="eggNOG" id="KOG3227">
    <property type="taxonomic scope" value="Eukaryota"/>
</dbReference>
<dbReference type="GeneTree" id="ENSGT00940000156352"/>
<dbReference type="InParanoid" id="Q62280"/>
<dbReference type="OMA" id="MGSAHQP"/>
<dbReference type="OrthoDB" id="10265171at2759"/>
<dbReference type="PhylomeDB" id="Q62280"/>
<dbReference type="TreeFam" id="TF330999"/>
<dbReference type="BioGRID-ORCS" id="268996">
    <property type="hits" value="9 hits in 80 CRISPR screens"/>
</dbReference>
<dbReference type="ChiTaRS" id="Ss18">
    <property type="organism name" value="mouse"/>
</dbReference>
<dbReference type="PRO" id="PR:Q62280"/>
<dbReference type="Proteomes" id="UP000000589">
    <property type="component" value="Chromosome 18"/>
</dbReference>
<dbReference type="RNAct" id="Q62280">
    <property type="molecule type" value="protein"/>
</dbReference>
<dbReference type="Bgee" id="ENSMUSG00000037013">
    <property type="expression patterns" value="Expressed in animal zygote and 183 other cell types or tissues"/>
</dbReference>
<dbReference type="ExpressionAtlas" id="Q62280">
    <property type="expression patterns" value="baseline and differential"/>
</dbReference>
<dbReference type="GO" id="GO:0000785">
    <property type="term" value="C:chromatin"/>
    <property type="evidence" value="ECO:0000303"/>
    <property type="project" value="ComplexPortal"/>
</dbReference>
<dbReference type="GO" id="GO:0140288">
    <property type="term" value="C:GBAF complex"/>
    <property type="evidence" value="ECO:0000303"/>
    <property type="project" value="ComplexPortal"/>
</dbReference>
<dbReference type="GO" id="GO:0015630">
    <property type="term" value="C:microtubule cytoskeleton"/>
    <property type="evidence" value="ECO:0000314"/>
    <property type="project" value="MGI"/>
</dbReference>
<dbReference type="GO" id="GO:0071564">
    <property type="term" value="C:npBAF complex"/>
    <property type="evidence" value="ECO:0000314"/>
    <property type="project" value="MGI"/>
</dbReference>
<dbReference type="GO" id="GO:0005654">
    <property type="term" value="C:nucleoplasm"/>
    <property type="evidence" value="ECO:0000304"/>
    <property type="project" value="Reactome"/>
</dbReference>
<dbReference type="GO" id="GO:0016514">
    <property type="term" value="C:SWI/SNF complex"/>
    <property type="evidence" value="ECO:0000314"/>
    <property type="project" value="UniProtKB"/>
</dbReference>
<dbReference type="GO" id="GO:0003713">
    <property type="term" value="F:transcription coactivator activity"/>
    <property type="evidence" value="ECO:0007669"/>
    <property type="project" value="Ensembl"/>
</dbReference>
<dbReference type="GO" id="GO:0000902">
    <property type="term" value="P:cell morphogenesis"/>
    <property type="evidence" value="ECO:0000314"/>
    <property type="project" value="MGI"/>
</dbReference>
<dbReference type="GO" id="GO:0006338">
    <property type="term" value="P:chromatin remodeling"/>
    <property type="evidence" value="ECO:0000303"/>
    <property type="project" value="ComplexPortal"/>
</dbReference>
<dbReference type="GO" id="GO:0007010">
    <property type="term" value="P:cytoskeleton organization"/>
    <property type="evidence" value="ECO:0000314"/>
    <property type="project" value="MGI"/>
</dbReference>
<dbReference type="GO" id="GO:0048013">
    <property type="term" value="P:ephrin receptor signaling pathway"/>
    <property type="evidence" value="ECO:0000314"/>
    <property type="project" value="MGI"/>
</dbReference>
<dbReference type="GO" id="GO:0035556">
    <property type="term" value="P:intracellular signal transduction"/>
    <property type="evidence" value="ECO:0000314"/>
    <property type="project" value="MGI"/>
</dbReference>
<dbReference type="GO" id="GO:0000226">
    <property type="term" value="P:microtubule cytoskeleton organization"/>
    <property type="evidence" value="ECO:0000314"/>
    <property type="project" value="MGI"/>
</dbReference>
<dbReference type="GO" id="GO:0045596">
    <property type="term" value="P:negative regulation of cell differentiation"/>
    <property type="evidence" value="ECO:0000303"/>
    <property type="project" value="ComplexPortal"/>
</dbReference>
<dbReference type="GO" id="GO:0097150">
    <property type="term" value="P:neuronal stem cell population maintenance"/>
    <property type="evidence" value="ECO:0000315"/>
    <property type="project" value="MGI"/>
</dbReference>
<dbReference type="GO" id="GO:0008284">
    <property type="term" value="P:positive regulation of cell population proliferation"/>
    <property type="evidence" value="ECO:0000303"/>
    <property type="project" value="ComplexPortal"/>
</dbReference>
<dbReference type="GO" id="GO:1902459">
    <property type="term" value="P:positive regulation of stem cell population maintenance"/>
    <property type="evidence" value="ECO:0000303"/>
    <property type="project" value="ComplexPortal"/>
</dbReference>
<dbReference type="GO" id="GO:0045944">
    <property type="term" value="P:positive regulation of transcription by RNA polymerase II"/>
    <property type="evidence" value="ECO:0007669"/>
    <property type="project" value="Ensembl"/>
</dbReference>
<dbReference type="GO" id="GO:0006357">
    <property type="term" value="P:regulation of transcription by RNA polymerase II"/>
    <property type="evidence" value="ECO:0000303"/>
    <property type="project" value="ComplexPortal"/>
</dbReference>
<dbReference type="GO" id="GO:0009410">
    <property type="term" value="P:response to xenobiotic stimulus"/>
    <property type="evidence" value="ECO:0000314"/>
    <property type="project" value="MGI"/>
</dbReference>
<dbReference type="InterPro" id="IPR007726">
    <property type="entry name" value="SS18_N"/>
</dbReference>
<dbReference type="PANTHER" id="PTHR23107:SF2">
    <property type="entry name" value="PROTEIN SSXT"/>
    <property type="match status" value="1"/>
</dbReference>
<dbReference type="PANTHER" id="PTHR23107">
    <property type="entry name" value="SYNOVIAL SARCOMA ASSOCIATED SS18 PROTEIN"/>
    <property type="match status" value="1"/>
</dbReference>
<dbReference type="Pfam" id="PF05030">
    <property type="entry name" value="SSXT"/>
    <property type="match status" value="1"/>
</dbReference>
<reference key="1">
    <citation type="journal article" date="1996" name="Oncogene">
        <title>Isolation and characterization of the mouse homolog of SYT, a gene implicated in the development of human synovial sarcomas.</title>
        <authorList>
            <person name="de Bruijn D.R.H."/>
            <person name="Baats E."/>
            <person name="Zechner U."/>
            <person name="de Leeuw B."/>
            <person name="Balemans M."/>
            <person name="Olde Weghuis D."/>
            <person name="Hirning-Folz U."/>
            <person name="Geurts van Kessel A.G."/>
        </authorList>
    </citation>
    <scope>NUCLEOTIDE SEQUENCE [MRNA]</scope>
    <source>
        <strain>129</strain>
        <tissue>Fetal brain</tissue>
    </source>
</reference>
<reference key="2">
    <citation type="journal article" date="2001" name="Cytogenet. Cell Genet.">
        <title>Mapping and characterization of the mouse and human SS18 genes, two human SS18-like genes and a mouse Ss18 pseudogene.</title>
        <authorList>
            <person name="de Bruijn D.R."/>
            <person name="Kater-Baats E."/>
            <person name="Eleveld M."/>
            <person name="Merkx G."/>
            <person name="Geurts Van Kessel A."/>
        </authorList>
    </citation>
    <scope>NUCLEOTIDE SEQUENCE [GENOMIC DNA]</scope>
    <source>
        <strain>C57BL/6J</strain>
    </source>
</reference>
<reference key="3">
    <citation type="journal article" date="2005" name="Science">
        <title>The transcriptional landscape of the mammalian genome.</title>
        <authorList>
            <person name="Carninci P."/>
            <person name="Kasukawa T."/>
            <person name="Katayama S."/>
            <person name="Gough J."/>
            <person name="Frith M.C."/>
            <person name="Maeda N."/>
            <person name="Oyama R."/>
            <person name="Ravasi T."/>
            <person name="Lenhard B."/>
            <person name="Wells C."/>
            <person name="Kodzius R."/>
            <person name="Shimokawa K."/>
            <person name="Bajic V.B."/>
            <person name="Brenner S.E."/>
            <person name="Batalov S."/>
            <person name="Forrest A.R."/>
            <person name="Zavolan M."/>
            <person name="Davis M.J."/>
            <person name="Wilming L.G."/>
            <person name="Aidinis V."/>
            <person name="Allen J.E."/>
            <person name="Ambesi-Impiombato A."/>
            <person name="Apweiler R."/>
            <person name="Aturaliya R.N."/>
            <person name="Bailey T.L."/>
            <person name="Bansal M."/>
            <person name="Baxter L."/>
            <person name="Beisel K.W."/>
            <person name="Bersano T."/>
            <person name="Bono H."/>
            <person name="Chalk A.M."/>
            <person name="Chiu K.P."/>
            <person name="Choudhary V."/>
            <person name="Christoffels A."/>
            <person name="Clutterbuck D.R."/>
            <person name="Crowe M.L."/>
            <person name="Dalla E."/>
            <person name="Dalrymple B.P."/>
            <person name="de Bono B."/>
            <person name="Della Gatta G."/>
            <person name="di Bernardo D."/>
            <person name="Down T."/>
            <person name="Engstrom P."/>
            <person name="Fagiolini M."/>
            <person name="Faulkner G."/>
            <person name="Fletcher C.F."/>
            <person name="Fukushima T."/>
            <person name="Furuno M."/>
            <person name="Futaki S."/>
            <person name="Gariboldi M."/>
            <person name="Georgii-Hemming P."/>
            <person name="Gingeras T.R."/>
            <person name="Gojobori T."/>
            <person name="Green R.E."/>
            <person name="Gustincich S."/>
            <person name="Harbers M."/>
            <person name="Hayashi Y."/>
            <person name="Hensch T.K."/>
            <person name="Hirokawa N."/>
            <person name="Hill D."/>
            <person name="Huminiecki L."/>
            <person name="Iacono M."/>
            <person name="Ikeo K."/>
            <person name="Iwama A."/>
            <person name="Ishikawa T."/>
            <person name="Jakt M."/>
            <person name="Kanapin A."/>
            <person name="Katoh M."/>
            <person name="Kawasawa Y."/>
            <person name="Kelso J."/>
            <person name="Kitamura H."/>
            <person name="Kitano H."/>
            <person name="Kollias G."/>
            <person name="Krishnan S.P."/>
            <person name="Kruger A."/>
            <person name="Kummerfeld S.K."/>
            <person name="Kurochkin I.V."/>
            <person name="Lareau L.F."/>
            <person name="Lazarevic D."/>
            <person name="Lipovich L."/>
            <person name="Liu J."/>
            <person name="Liuni S."/>
            <person name="McWilliam S."/>
            <person name="Madan Babu M."/>
            <person name="Madera M."/>
            <person name="Marchionni L."/>
            <person name="Matsuda H."/>
            <person name="Matsuzawa S."/>
            <person name="Miki H."/>
            <person name="Mignone F."/>
            <person name="Miyake S."/>
            <person name="Morris K."/>
            <person name="Mottagui-Tabar S."/>
            <person name="Mulder N."/>
            <person name="Nakano N."/>
            <person name="Nakauchi H."/>
            <person name="Ng P."/>
            <person name="Nilsson R."/>
            <person name="Nishiguchi S."/>
            <person name="Nishikawa S."/>
            <person name="Nori F."/>
            <person name="Ohara O."/>
            <person name="Okazaki Y."/>
            <person name="Orlando V."/>
            <person name="Pang K.C."/>
            <person name="Pavan W.J."/>
            <person name="Pavesi G."/>
            <person name="Pesole G."/>
            <person name="Petrovsky N."/>
            <person name="Piazza S."/>
            <person name="Reed J."/>
            <person name="Reid J.F."/>
            <person name="Ring B.Z."/>
            <person name="Ringwald M."/>
            <person name="Rost B."/>
            <person name="Ruan Y."/>
            <person name="Salzberg S.L."/>
            <person name="Sandelin A."/>
            <person name="Schneider C."/>
            <person name="Schoenbach C."/>
            <person name="Sekiguchi K."/>
            <person name="Semple C.A."/>
            <person name="Seno S."/>
            <person name="Sessa L."/>
            <person name="Sheng Y."/>
            <person name="Shibata Y."/>
            <person name="Shimada H."/>
            <person name="Shimada K."/>
            <person name="Silva D."/>
            <person name="Sinclair B."/>
            <person name="Sperling S."/>
            <person name="Stupka E."/>
            <person name="Sugiura K."/>
            <person name="Sultana R."/>
            <person name="Takenaka Y."/>
            <person name="Taki K."/>
            <person name="Tammoja K."/>
            <person name="Tan S.L."/>
            <person name="Tang S."/>
            <person name="Taylor M.S."/>
            <person name="Tegner J."/>
            <person name="Teichmann S.A."/>
            <person name="Ueda H.R."/>
            <person name="van Nimwegen E."/>
            <person name="Verardo R."/>
            <person name="Wei C.L."/>
            <person name="Yagi K."/>
            <person name="Yamanishi H."/>
            <person name="Zabarovsky E."/>
            <person name="Zhu S."/>
            <person name="Zimmer A."/>
            <person name="Hide W."/>
            <person name="Bult C."/>
            <person name="Grimmond S.M."/>
            <person name="Teasdale R.D."/>
            <person name="Liu E.T."/>
            <person name="Brusic V."/>
            <person name="Quackenbush J."/>
            <person name="Wahlestedt C."/>
            <person name="Mattick J.S."/>
            <person name="Hume D.A."/>
            <person name="Kai C."/>
            <person name="Sasaki D."/>
            <person name="Tomaru Y."/>
            <person name="Fukuda S."/>
            <person name="Kanamori-Katayama M."/>
            <person name="Suzuki M."/>
            <person name="Aoki J."/>
            <person name="Arakawa T."/>
            <person name="Iida J."/>
            <person name="Imamura K."/>
            <person name="Itoh M."/>
            <person name="Kato T."/>
            <person name="Kawaji H."/>
            <person name="Kawagashira N."/>
            <person name="Kawashima T."/>
            <person name="Kojima M."/>
            <person name="Kondo S."/>
            <person name="Konno H."/>
            <person name="Nakano K."/>
            <person name="Ninomiya N."/>
            <person name="Nishio T."/>
            <person name="Okada M."/>
            <person name="Plessy C."/>
            <person name="Shibata K."/>
            <person name="Shiraki T."/>
            <person name="Suzuki S."/>
            <person name="Tagami M."/>
            <person name="Waki K."/>
            <person name="Watahiki A."/>
            <person name="Okamura-Oho Y."/>
            <person name="Suzuki H."/>
            <person name="Kawai J."/>
            <person name="Hayashizaki Y."/>
        </authorList>
    </citation>
    <scope>NUCLEOTIDE SEQUENCE [LARGE SCALE MRNA]</scope>
    <source>
        <tissue>Lung</tissue>
    </source>
</reference>
<reference key="4">
    <citation type="journal article" date="2018" name="J. Biol. Chem.">
        <title>Glioma tumor suppressor candidate region gene 1 (GLTSCR1) and its paralog GLTSCR1-like form SWI/SNF chromatin remodeling subcomplexes.</title>
        <authorList>
            <person name="Alpsoy A."/>
            <person name="Dykhuizen E.C."/>
        </authorList>
    </citation>
    <scope>FUNCTION</scope>
    <scope>IDENTIFICATION IN THE GBAF COMPLEX</scope>
</reference>
<name>SSXT_MOUSE</name>
<organism>
    <name type="scientific">Mus musculus</name>
    <name type="common">Mouse</name>
    <dbReference type="NCBI Taxonomy" id="10090"/>
    <lineage>
        <taxon>Eukaryota</taxon>
        <taxon>Metazoa</taxon>
        <taxon>Chordata</taxon>
        <taxon>Craniata</taxon>
        <taxon>Vertebrata</taxon>
        <taxon>Euteleostomi</taxon>
        <taxon>Mammalia</taxon>
        <taxon>Eutheria</taxon>
        <taxon>Euarchontoglires</taxon>
        <taxon>Glires</taxon>
        <taxon>Rodentia</taxon>
        <taxon>Myomorpha</taxon>
        <taxon>Muroidea</taxon>
        <taxon>Muridae</taxon>
        <taxon>Murinae</taxon>
        <taxon>Mus</taxon>
        <taxon>Mus</taxon>
    </lineage>
</organism>
<evidence type="ECO:0000250" key="1">
    <source>
        <dbReference type="UniProtKB" id="Q15532"/>
    </source>
</evidence>
<evidence type="ECO:0000255" key="2"/>
<evidence type="ECO:0000256" key="3">
    <source>
        <dbReference type="SAM" id="MobiDB-lite"/>
    </source>
</evidence>
<evidence type="ECO:0000269" key="4">
    <source>
    </source>
</evidence>
<evidence type="ECO:0000305" key="5"/>
<proteinExistence type="evidence at protein level"/>